<accession>B3EWR5</accession>
<protein>
    <recommendedName>
        <fullName>Beta-hexosaminidase</fullName>
        <ecNumber>3.2.1.52</ecNumber>
    </recommendedName>
    <alternativeName>
        <fullName>Beta-GlcNAcase</fullName>
    </alternativeName>
    <alternativeName>
        <fullName>Beta-N-acetylhexosaminidase</fullName>
        <shortName>Beta-NAHase</shortName>
    </alternativeName>
    <alternativeName>
        <fullName>N-acetyl-beta-glucosaminidase</fullName>
    </alternativeName>
</protein>
<name>HEXL_LUPAL</name>
<evidence type="ECO:0000269" key="1">
    <source>
    </source>
</evidence>
<reference key="1">
    <citation type="journal article" date="2013" name="J. Plant Physiol.">
        <title>beta-N-Acetylhexosaminidase involvement in alpha-conglutin mobilization in Lupinus albus.</title>
        <authorList>
            <person name="Santos C.N."/>
            <person name="Alves M."/>
            <person name="Oliveira A."/>
            <person name="Ferreira R.B."/>
        </authorList>
    </citation>
    <scope>PROTEIN SEQUENCE</scope>
    <scope>FUNCTION</scope>
    <scope>CATALYTIC ACTIVITY</scope>
    <scope>ACTIVITY REGULATION</scope>
    <scope>BIOPHYSICOCHEMICAL PROPERTIES</scope>
    <scope>TISSUE SPECIFICITY</scope>
    <scope>DEVELOPMENTAL STAGE</scope>
    <scope>GLYCOSYLATION</scope>
    <source>
        <tissue>Cotyledon</tissue>
    </source>
</reference>
<organism>
    <name type="scientific">Lupinus albus</name>
    <name type="common">White lupine</name>
    <name type="synonym">Lupinus termis</name>
    <dbReference type="NCBI Taxonomy" id="3870"/>
    <lineage>
        <taxon>Eukaryota</taxon>
        <taxon>Viridiplantae</taxon>
        <taxon>Streptophyta</taxon>
        <taxon>Embryophyta</taxon>
        <taxon>Tracheophyta</taxon>
        <taxon>Spermatophyta</taxon>
        <taxon>Magnoliopsida</taxon>
        <taxon>eudicotyledons</taxon>
        <taxon>Gunneridae</taxon>
        <taxon>Pentapetalae</taxon>
        <taxon>rosids</taxon>
        <taxon>fabids</taxon>
        <taxon>Fabales</taxon>
        <taxon>Fabaceae</taxon>
        <taxon>Papilionoideae</taxon>
        <taxon>50 kb inversion clade</taxon>
        <taxon>genistoids sensu lato</taxon>
        <taxon>core genistoids</taxon>
        <taxon>Genisteae</taxon>
        <taxon>Lupinus</taxon>
    </lineage>
</organism>
<feature type="peptide" id="PRO_0000422556" description="Beta-hexosaminidase">
    <location>
        <begin position="1"/>
        <end position="26" status="greater than"/>
    </location>
</feature>
<feature type="unsure residue" description="E or N">
    <location>
        <position position="8"/>
    </location>
</feature>
<feature type="non-terminal residue">
    <location>
        <position position="26"/>
    </location>
</feature>
<keyword id="KW-0903">Direct protein sequencing</keyword>
<keyword id="KW-0325">Glycoprotein</keyword>
<keyword id="KW-0326">Glycosidase</keyword>
<keyword id="KW-0378">Hydrolase</keyword>
<sequence>VDSEDLIEAFKIYVEDDNEHLQGSVD</sequence>
<comment type="function">
    <text evidence="1">Has hexosaminidase activity. Active with both p-nitrophenyl-beta-D-N-acetylglucosamine (pNP-GlcNAc) and p-nitrophenyl-beta-D-N-acetylgalactosamine (pNP-GalNAc). Not active toward p-nitrophenyl-beta-D-N,N'-diacetylchitobiose (pNP-(GlcNAc)2) or p-nitrophenyl-beta-D-N,N',N''-triacetylchitobiose (pNP-(GlcNAc)3). Removes terminal GlcNAc and may be involved in storage protein degradation.</text>
</comment>
<comment type="catalytic activity">
    <reaction evidence="1">
        <text>Hydrolysis of terminal non-reducing N-acetyl-D-hexosamine residues in N-acetyl-beta-D-hexosaminides.</text>
        <dbReference type="EC" id="3.2.1.52"/>
    </reaction>
</comment>
<comment type="activity regulation">
    <text evidence="1">Inhibited by AgNO(3) at a concentration of 0.1 mM. Strongly inhibited by CdCl(2), ZnCl(2) and FeCl(3) and moderately by CoCl(2), CuSO(4) and NiCl(2) at 10 mM concentration. CaCl(2), MgCl(2), MnSO(4) and KI also have a slight inhibitory effect of 20%-25% at 10 mM concentration. Activated to a small extent by MgCl(2) at 0.1 mM concentration but inhibited with increasing concentration. Not affected by carbohydrates such as fucose, galactose and glucose but displays a slight decrease in activity up to 25% with lactose, alpha-mannose and N-acetyl-galactosamine (GalNAc).</text>
</comment>
<comment type="biophysicochemical properties">
    <kinetics>
        <KM evidence="1">2.59 mM for pNP-GlcNAc</KM>
        <KM evidence="1">2.94 mM for pNP-GalcNAc</KM>
        <Vmax evidence="1">18.4 umol/min/mg enzyme with pNP-GlcNAc as substrate</Vmax>
        <Vmax evidence="1">2.73 umol/min/mg enzyme with pNP-GalcNAc as substrate</Vmax>
    </kinetics>
    <phDependence>
        <text evidence="1">Optimum pH is 5.0 with pNP-GlcNAc and 4.0 with pNP-GalNAc. Half maximal activity observed at pH 3.0 and 6.5 with pNP-GlcNAc and at pH 2.5 and 5.5 with pNP-GalNAc. Retains over 90% of its activity between pH 6.5-8.0 with pNP-GlcNAc, and between pH 6.0-7.5 with pNP-GalNAc.</text>
    </phDependence>
    <temperatureDependence>
        <text evidence="1">Optimum temperature is 50 degrees Celsius toward pNP-GlcNAc and 60 degrees Celsius toward pNP-GalNAc. Displays activity higher than 50% between 35-70 degrees Celsius. Stable under 30 degrees Celsius.</text>
    </temperatureDependence>
</comment>
<comment type="tissue specificity">
    <text evidence="1">Detected in dry seeds and cotyledons.</text>
</comment>
<comment type="developmental stage">
    <text evidence="1">Activity levels increase 5-9 days after imbibition in the hypocotyls and within 3-9 days in the roots. Detected in dry seeds but increased levels observed 5 days after seed imbibition.</text>
</comment>
<comment type="PTM">
    <text evidence="1">Glycosylated.</text>
</comment>
<dbReference type="EC" id="3.2.1.52"/>
<dbReference type="GO" id="GO:0004563">
    <property type="term" value="F:beta-N-acetylhexosaminidase activity"/>
    <property type="evidence" value="ECO:0007669"/>
    <property type="project" value="UniProtKB-EC"/>
</dbReference>
<proteinExistence type="evidence at protein level"/>